<proteinExistence type="evidence at protein level"/>
<dbReference type="PIR" id="S11349">
    <property type="entry name" value="S11349"/>
</dbReference>
<dbReference type="FunCoup" id="P18437">
    <property type="interactions" value="1425"/>
</dbReference>
<dbReference type="STRING" id="10116.ENSRNOP00000074978"/>
<dbReference type="iPTMnet" id="P18437"/>
<dbReference type="PhosphoSitePlus" id="P18437"/>
<dbReference type="PaxDb" id="10116-ENSRNOP00000064333"/>
<dbReference type="UCSC" id="RGD:620649">
    <property type="organism name" value="rat"/>
</dbReference>
<dbReference type="AGR" id="RGD:620649"/>
<dbReference type="RGD" id="620649">
    <property type="gene designation" value="Hmgn2"/>
</dbReference>
<dbReference type="eggNOG" id="ENOG502S5FK">
    <property type="taxonomic scope" value="Eukaryota"/>
</dbReference>
<dbReference type="InParanoid" id="P18437"/>
<dbReference type="PRO" id="PR:P18437"/>
<dbReference type="Proteomes" id="UP000002494">
    <property type="component" value="Unplaced"/>
</dbReference>
<dbReference type="GO" id="GO:0000785">
    <property type="term" value="C:chromatin"/>
    <property type="evidence" value="ECO:0007669"/>
    <property type="project" value="InterPro"/>
</dbReference>
<dbReference type="GO" id="GO:0005694">
    <property type="term" value="C:chromosome"/>
    <property type="evidence" value="ECO:0000304"/>
    <property type="project" value="RGD"/>
</dbReference>
<dbReference type="GO" id="GO:0005737">
    <property type="term" value="C:cytoplasm"/>
    <property type="evidence" value="ECO:0000266"/>
    <property type="project" value="RGD"/>
</dbReference>
<dbReference type="GO" id="GO:0005615">
    <property type="term" value="C:extracellular space"/>
    <property type="evidence" value="ECO:0000266"/>
    <property type="project" value="RGD"/>
</dbReference>
<dbReference type="GO" id="GO:0001674">
    <property type="term" value="C:female germ cell nucleus"/>
    <property type="evidence" value="ECO:0000266"/>
    <property type="project" value="RGD"/>
</dbReference>
<dbReference type="GO" id="GO:0005634">
    <property type="term" value="C:nucleus"/>
    <property type="evidence" value="ECO:0000266"/>
    <property type="project" value="RGD"/>
</dbReference>
<dbReference type="GO" id="GO:0003682">
    <property type="term" value="F:chromatin binding"/>
    <property type="evidence" value="ECO:0000318"/>
    <property type="project" value="GO_Central"/>
</dbReference>
<dbReference type="GO" id="GO:0031492">
    <property type="term" value="F:nucleosomal DNA binding"/>
    <property type="evidence" value="ECO:0007669"/>
    <property type="project" value="InterPro"/>
</dbReference>
<dbReference type="GO" id="GO:0061844">
    <property type="term" value="P:antimicrobial humoral immune response mediated by antimicrobial peptide"/>
    <property type="evidence" value="ECO:0000266"/>
    <property type="project" value="RGD"/>
</dbReference>
<dbReference type="GO" id="GO:0006325">
    <property type="term" value="P:chromatin organization"/>
    <property type="evidence" value="ECO:0000318"/>
    <property type="project" value="GO_Central"/>
</dbReference>
<dbReference type="GO" id="GO:0000122">
    <property type="term" value="P:negative regulation of transcription by RNA polymerase II"/>
    <property type="evidence" value="ECO:0000266"/>
    <property type="project" value="RGD"/>
</dbReference>
<dbReference type="GO" id="GO:0040034">
    <property type="term" value="P:regulation of development, heterochronic"/>
    <property type="evidence" value="ECO:0000266"/>
    <property type="project" value="RGD"/>
</dbReference>
<dbReference type="GO" id="GO:0006357">
    <property type="term" value="P:regulation of transcription by RNA polymerase II"/>
    <property type="evidence" value="ECO:0000266"/>
    <property type="project" value="RGD"/>
</dbReference>
<dbReference type="InterPro" id="IPR000079">
    <property type="entry name" value="HMGN_fam"/>
</dbReference>
<dbReference type="PANTHER" id="PTHR23087:SF13">
    <property type="entry name" value="NON-HISTONE CHROMOSOMAL PROTEIN HMG-17"/>
    <property type="match status" value="1"/>
</dbReference>
<dbReference type="PANTHER" id="PTHR23087">
    <property type="entry name" value="NONHISTONE CHROMOSOMAL PROTEIN HMG"/>
    <property type="match status" value="1"/>
</dbReference>
<dbReference type="Pfam" id="PF01101">
    <property type="entry name" value="HMG14_17"/>
    <property type="match status" value="1"/>
</dbReference>
<dbReference type="PRINTS" id="PR00925">
    <property type="entry name" value="NONHISHMG17"/>
</dbReference>
<dbReference type="SMART" id="SM00527">
    <property type="entry name" value="HMG17"/>
    <property type="match status" value="1"/>
</dbReference>
<dbReference type="PROSITE" id="PS00355">
    <property type="entry name" value="HMG14_17"/>
    <property type="match status" value="1"/>
</dbReference>
<evidence type="ECO:0000250" key="1"/>
<evidence type="ECO:0000250" key="2">
    <source>
        <dbReference type="UniProtKB" id="P05204"/>
    </source>
</evidence>
<evidence type="ECO:0000256" key="3">
    <source>
        <dbReference type="SAM" id="MobiDB-lite"/>
    </source>
</evidence>
<evidence type="ECO:0000269" key="4">
    <source>
    </source>
</evidence>
<evidence type="ECO:0000305" key="5"/>
<reference key="1">
    <citation type="journal article" date="1990" name="Eur. J. Biochem.">
        <title>Protein HMG-17 is hyper-expressed in rat glucagonoma. Single-step isolation and sequencing.</title>
        <authorList>
            <person name="Nielsen E."/>
            <person name="Welinder B."/>
            <person name="Madsen O.D."/>
        </authorList>
    </citation>
    <scope>PROTEIN SEQUENCE OF 2-90</scope>
</reference>
<keyword id="KW-0007">Acetylation</keyword>
<keyword id="KW-0013">ADP-ribosylation</keyword>
<keyword id="KW-0963">Cytoplasm</keyword>
<keyword id="KW-0903">Direct protein sequencing</keyword>
<keyword id="KW-0238">DNA-binding</keyword>
<keyword id="KW-1017">Isopeptide bond</keyword>
<keyword id="KW-0539">Nucleus</keyword>
<keyword id="KW-0597">Phosphoprotein</keyword>
<keyword id="KW-1185">Reference proteome</keyword>
<keyword id="KW-0832">Ubl conjugation</keyword>
<gene>
    <name type="primary">Hmgn2</name>
    <name type="synonym">Hmg-17</name>
    <name type="synonym">Hmg17</name>
</gene>
<feature type="initiator methionine" description="Removed" evidence="4">
    <location>
        <position position="1"/>
    </location>
</feature>
<feature type="chain" id="PRO_0000206701" description="Non-histone chromosomal protein HMG-17">
    <location>
        <begin position="2"/>
        <end position="90"/>
    </location>
</feature>
<feature type="region of interest" description="Disordered" evidence="3">
    <location>
        <begin position="1"/>
        <end position="90"/>
    </location>
</feature>
<feature type="compositionally biased region" description="Basic and acidic residues" evidence="3">
    <location>
        <begin position="1"/>
        <end position="23"/>
    </location>
</feature>
<feature type="compositionally biased region" description="Basic and acidic residues" evidence="3">
    <location>
        <begin position="37"/>
        <end position="64"/>
    </location>
</feature>
<feature type="compositionally biased region" description="Basic and acidic residues" evidence="3">
    <location>
        <begin position="73"/>
        <end position="90"/>
    </location>
</feature>
<feature type="modified residue" description="Phosphoserine" evidence="2">
    <location>
        <position position="25"/>
    </location>
</feature>
<feature type="modified residue" description="ADP-ribosylserine; alternate" evidence="2">
    <location>
        <position position="29"/>
    </location>
</feature>
<feature type="modified residue" description="Phosphoserine; alternate" evidence="2">
    <location>
        <position position="29"/>
    </location>
</feature>
<feature type="modified residue" description="N6-acetyllysine; alternate" evidence="2">
    <location>
        <position position="82"/>
    </location>
</feature>
<feature type="cross-link" description="Glycyl lysine isopeptide (Lys-Gly) (interchain with G-Cter in SUMO2); alternate" evidence="2">
    <location>
        <position position="82"/>
    </location>
</feature>
<comment type="function">
    <text evidence="1">Binds to the inner side of the nucleosomal DNA thus altering the interaction between the DNA and the histone octamer. May be involved in the process which maintains transcribable genes in a unique chromatin conformation (By similarity).</text>
</comment>
<comment type="subcellular location">
    <subcellularLocation>
        <location evidence="1">Nucleus</location>
    </subcellularLocation>
    <subcellularLocation>
        <location evidence="1">Cytoplasm</location>
    </subcellularLocation>
    <text evidence="1">Cytoplasmic enrichment upon phosphorylation.</text>
</comment>
<comment type="PTM">
    <text evidence="1">Phosphorylation favors cytoplasmic localization.</text>
</comment>
<comment type="similarity">
    <text evidence="5">Belongs to the HMGN family.</text>
</comment>
<protein>
    <recommendedName>
        <fullName>Non-histone chromosomal protein HMG-17</fullName>
    </recommendedName>
    <alternativeName>
        <fullName>High mobility group nucleosome-binding domain-containing protein 2</fullName>
    </alternativeName>
</protein>
<sequence>MPKRNAEGDAKGDKAKVKDEPQRRSARLSAKPAPPKPEPKPKKAPAKKGEKVPKGKKGKADAGKDANNPAEDGDAKTDQAQKADGAGDAK</sequence>
<accession>P18437</accession>
<name>HMGN2_RAT</name>
<organism>
    <name type="scientific">Rattus norvegicus</name>
    <name type="common">Rat</name>
    <dbReference type="NCBI Taxonomy" id="10116"/>
    <lineage>
        <taxon>Eukaryota</taxon>
        <taxon>Metazoa</taxon>
        <taxon>Chordata</taxon>
        <taxon>Craniata</taxon>
        <taxon>Vertebrata</taxon>
        <taxon>Euteleostomi</taxon>
        <taxon>Mammalia</taxon>
        <taxon>Eutheria</taxon>
        <taxon>Euarchontoglires</taxon>
        <taxon>Glires</taxon>
        <taxon>Rodentia</taxon>
        <taxon>Myomorpha</taxon>
        <taxon>Muroidea</taxon>
        <taxon>Muridae</taxon>
        <taxon>Murinae</taxon>
        <taxon>Rattus</taxon>
    </lineage>
</organism>